<reference key="1">
    <citation type="journal article" date="2005" name="J. Bacteriol.">
        <title>The genome of Sulfolobus acidocaldarius, a model organism of the Crenarchaeota.</title>
        <authorList>
            <person name="Chen L."/>
            <person name="Bruegger K."/>
            <person name="Skovgaard M."/>
            <person name="Redder P."/>
            <person name="She Q."/>
            <person name="Torarinsson E."/>
            <person name="Greve B."/>
            <person name="Awayez M."/>
            <person name="Zibat A."/>
            <person name="Klenk H.-P."/>
            <person name="Garrett R.A."/>
        </authorList>
    </citation>
    <scope>NUCLEOTIDE SEQUENCE [LARGE SCALE GENOMIC DNA]</scope>
    <source>
        <strain>ATCC 33909 / DSM 639 / JCM 8929 / NBRC 15157 / NCIMB 11770</strain>
    </source>
</reference>
<organism>
    <name type="scientific">Sulfolobus acidocaldarius (strain ATCC 33909 / DSM 639 / JCM 8929 / NBRC 15157 / NCIMB 11770)</name>
    <dbReference type="NCBI Taxonomy" id="330779"/>
    <lineage>
        <taxon>Archaea</taxon>
        <taxon>Thermoproteota</taxon>
        <taxon>Thermoprotei</taxon>
        <taxon>Sulfolobales</taxon>
        <taxon>Sulfolobaceae</taxon>
        <taxon>Sulfolobus</taxon>
    </lineage>
</organism>
<name>PCNA2_SULAC</name>
<feature type="chain" id="PRO_0000149211" description="DNA polymerase sliding clamp 2">
    <location>
        <begin position="1"/>
        <end position="245"/>
    </location>
</feature>
<proteinExistence type="inferred from homology"/>
<evidence type="ECO:0000255" key="1">
    <source>
        <dbReference type="HAMAP-Rule" id="MF_00317"/>
    </source>
</evidence>
<gene>
    <name evidence="1" type="primary">pcn2</name>
    <name type="ordered locus">Saci_1280</name>
</gene>
<dbReference type="EMBL" id="CP000077">
    <property type="protein sequence ID" value="AAY80622.1"/>
    <property type="molecule type" value="Genomic_DNA"/>
</dbReference>
<dbReference type="RefSeq" id="WP_011278124.1">
    <property type="nucleotide sequence ID" value="NC_007181.1"/>
</dbReference>
<dbReference type="SMR" id="Q4J9A8"/>
<dbReference type="STRING" id="330779.Saci_1280"/>
<dbReference type="GeneID" id="14551785"/>
<dbReference type="KEGG" id="sai:Saci_1280"/>
<dbReference type="PATRIC" id="fig|330779.12.peg.1238"/>
<dbReference type="eggNOG" id="arCOG00488">
    <property type="taxonomic scope" value="Archaea"/>
</dbReference>
<dbReference type="HOGENOM" id="CLU_043978_1_1_2"/>
<dbReference type="Proteomes" id="UP000001018">
    <property type="component" value="Chromosome"/>
</dbReference>
<dbReference type="GO" id="GO:0003677">
    <property type="term" value="F:DNA binding"/>
    <property type="evidence" value="ECO:0007669"/>
    <property type="project" value="UniProtKB-UniRule"/>
</dbReference>
<dbReference type="GO" id="GO:0030337">
    <property type="term" value="F:DNA polymerase processivity factor activity"/>
    <property type="evidence" value="ECO:0007669"/>
    <property type="project" value="UniProtKB-UniRule"/>
</dbReference>
<dbReference type="GO" id="GO:0006272">
    <property type="term" value="P:leading strand elongation"/>
    <property type="evidence" value="ECO:0007669"/>
    <property type="project" value="TreeGrafter"/>
</dbReference>
<dbReference type="GO" id="GO:0006275">
    <property type="term" value="P:regulation of DNA replication"/>
    <property type="evidence" value="ECO:0007669"/>
    <property type="project" value="UniProtKB-UniRule"/>
</dbReference>
<dbReference type="CDD" id="cd00577">
    <property type="entry name" value="PCNA"/>
    <property type="match status" value="1"/>
</dbReference>
<dbReference type="Gene3D" id="3.70.10.10">
    <property type="match status" value="1"/>
</dbReference>
<dbReference type="HAMAP" id="MF_00317">
    <property type="entry name" value="DNApol_clamp_arch"/>
    <property type="match status" value="1"/>
</dbReference>
<dbReference type="InterPro" id="IPR046938">
    <property type="entry name" value="DNA_clamp_sf"/>
</dbReference>
<dbReference type="InterPro" id="IPR000730">
    <property type="entry name" value="Pr_cel_nuc_antig"/>
</dbReference>
<dbReference type="InterPro" id="IPR022659">
    <property type="entry name" value="Pr_cel_nuc_antig_CS"/>
</dbReference>
<dbReference type="InterPro" id="IPR022648">
    <property type="entry name" value="Pr_cel_nuc_antig_N"/>
</dbReference>
<dbReference type="NCBIfam" id="NF002220">
    <property type="entry name" value="PRK01115.1-3"/>
    <property type="match status" value="1"/>
</dbReference>
<dbReference type="PANTHER" id="PTHR11352">
    <property type="entry name" value="PROLIFERATING CELL NUCLEAR ANTIGEN"/>
    <property type="match status" value="1"/>
</dbReference>
<dbReference type="PANTHER" id="PTHR11352:SF0">
    <property type="entry name" value="PROLIFERATING CELL NUCLEAR ANTIGEN"/>
    <property type="match status" value="1"/>
</dbReference>
<dbReference type="Pfam" id="PF00705">
    <property type="entry name" value="PCNA_N"/>
    <property type="match status" value="1"/>
</dbReference>
<dbReference type="PRINTS" id="PR00339">
    <property type="entry name" value="PCNACYCLIN"/>
</dbReference>
<dbReference type="SUPFAM" id="SSF55979">
    <property type="entry name" value="DNA clamp"/>
    <property type="match status" value="2"/>
</dbReference>
<dbReference type="PROSITE" id="PS01251">
    <property type="entry name" value="PCNA_1"/>
    <property type="match status" value="1"/>
</dbReference>
<accession>Q4J9A8</accession>
<protein>
    <recommendedName>
        <fullName evidence="1">DNA polymerase sliding clamp 2</fullName>
    </recommendedName>
    <alternativeName>
        <fullName evidence="1">Proliferating cell nuclear antigen homolog 2</fullName>
        <shortName evidence="1">PCNA 2</shortName>
    </alternativeName>
</protein>
<comment type="function">
    <text evidence="1">Sliding clamp subunit that acts as a moving platform for DNA processing. Responsible for tethering the catalytic subunit of DNA polymerase and other proteins to DNA during high-speed replication.</text>
</comment>
<comment type="subunit">
    <text evidence="1">Homotrimer. The subunits circularize to form a toroid; DNA passes through its center. Replication factor C (RFC) is required to load the toroid on the DNA.</text>
</comment>
<comment type="similarity">
    <text evidence="1">Belongs to the PCNA family.</text>
</comment>
<sequence length="245" mass="27562">MKVKVVDALGFSYIFKTLSQYVSEATLLFGNDGFKVKGMDPSKVVYIDIFVPKDYFEEYNLENEMKIGVSLKDVNEVIKNVSKEDILYLELEKDKIMFTLDGEYLRTFSLPVLSPDEVETPSINLEFPFRANILTSTFGDLLDEFDQIGGDSIRFKAQNGKLYLSVMGDMGESIVELSLENGGLLESTGTDAESLYGLEHVSNTTKMRRPSDTLEIAFGSQLPLKLRYNLPKGGYADFYIAPRSE</sequence>
<keyword id="KW-0235">DNA replication</keyword>
<keyword id="KW-0238">DNA-binding</keyword>
<keyword id="KW-1185">Reference proteome</keyword>